<dbReference type="EMBL" id="CP001120">
    <property type="protein sequence ID" value="ACF69913.1"/>
    <property type="molecule type" value="Genomic_DNA"/>
</dbReference>
<dbReference type="RefSeq" id="WP_000490276.1">
    <property type="nucleotide sequence ID" value="NC_011083.1"/>
</dbReference>
<dbReference type="KEGG" id="seh:SeHA_C4970"/>
<dbReference type="HOGENOM" id="CLU_187346_2_0_6"/>
<dbReference type="Proteomes" id="UP000001866">
    <property type="component" value="Chromosome"/>
</dbReference>
<dbReference type="GO" id="GO:0005886">
    <property type="term" value="C:plasma membrane"/>
    <property type="evidence" value="ECO:0007669"/>
    <property type="project" value="UniProtKB-SubCell"/>
</dbReference>
<dbReference type="HAMAP" id="MF_01361">
    <property type="entry name" value="UPF0391"/>
    <property type="match status" value="1"/>
</dbReference>
<dbReference type="InterPro" id="IPR009760">
    <property type="entry name" value="DUF1328"/>
</dbReference>
<dbReference type="NCBIfam" id="NF010229">
    <property type="entry name" value="PRK13682.1-4"/>
    <property type="match status" value="1"/>
</dbReference>
<dbReference type="NCBIfam" id="NF010230">
    <property type="entry name" value="PRK13682.1-5"/>
    <property type="match status" value="1"/>
</dbReference>
<dbReference type="Pfam" id="PF07043">
    <property type="entry name" value="DUF1328"/>
    <property type="match status" value="1"/>
</dbReference>
<dbReference type="PIRSF" id="PIRSF036466">
    <property type="entry name" value="UCP036466"/>
    <property type="match status" value="1"/>
</dbReference>
<feature type="chain" id="PRO_1000143723" description="UPF0391 membrane protein YtjA">
    <location>
        <begin position="1"/>
        <end position="53"/>
    </location>
</feature>
<feature type="transmembrane region" description="Helical" evidence="1">
    <location>
        <begin position="4"/>
        <end position="24"/>
    </location>
</feature>
<feature type="transmembrane region" description="Helical" evidence="1">
    <location>
        <begin position="30"/>
        <end position="48"/>
    </location>
</feature>
<gene>
    <name evidence="1" type="primary">ytjA</name>
    <name type="ordered locus">SeHA_C4970</name>
</gene>
<accession>B4TGZ4</accession>
<keyword id="KW-1003">Cell membrane</keyword>
<keyword id="KW-0472">Membrane</keyword>
<keyword id="KW-0812">Transmembrane</keyword>
<keyword id="KW-1133">Transmembrane helix</keyword>
<name>YTJA_SALHS</name>
<evidence type="ECO:0000255" key="1">
    <source>
        <dbReference type="HAMAP-Rule" id="MF_01361"/>
    </source>
</evidence>
<organism>
    <name type="scientific">Salmonella heidelberg (strain SL476)</name>
    <dbReference type="NCBI Taxonomy" id="454169"/>
    <lineage>
        <taxon>Bacteria</taxon>
        <taxon>Pseudomonadati</taxon>
        <taxon>Pseudomonadota</taxon>
        <taxon>Gammaproteobacteria</taxon>
        <taxon>Enterobacterales</taxon>
        <taxon>Enterobacteriaceae</taxon>
        <taxon>Salmonella</taxon>
    </lineage>
</organism>
<reference key="1">
    <citation type="journal article" date="2011" name="J. Bacteriol.">
        <title>Comparative genomics of 28 Salmonella enterica isolates: evidence for CRISPR-mediated adaptive sublineage evolution.</title>
        <authorList>
            <person name="Fricke W.F."/>
            <person name="Mammel M.K."/>
            <person name="McDermott P.F."/>
            <person name="Tartera C."/>
            <person name="White D.G."/>
            <person name="Leclerc J.E."/>
            <person name="Ravel J."/>
            <person name="Cebula T.A."/>
        </authorList>
    </citation>
    <scope>NUCLEOTIDE SEQUENCE [LARGE SCALE GENOMIC DNA]</scope>
    <source>
        <strain>SL476</strain>
    </source>
</reference>
<sequence length="53" mass="5522">MFRWGIIFLVIALIAAALGFGGLAGTAAGAAKIVFVVGIVLFLVSLFMGRKRP</sequence>
<comment type="subcellular location">
    <subcellularLocation>
        <location evidence="1">Cell membrane</location>
        <topology evidence="1">Multi-pass membrane protein</topology>
    </subcellularLocation>
</comment>
<comment type="similarity">
    <text evidence="1">Belongs to the UPF0391 family.</text>
</comment>
<protein>
    <recommendedName>
        <fullName evidence="1">UPF0391 membrane protein YtjA</fullName>
    </recommendedName>
</protein>
<proteinExistence type="inferred from homology"/>